<dbReference type="EC" id="1.3.7.15" evidence="1"/>
<dbReference type="EMBL" id="AJ010302">
    <property type="protein sequence ID" value="CAB38748.1"/>
    <property type="molecule type" value="Genomic_DNA"/>
</dbReference>
<dbReference type="EMBL" id="AF195122">
    <property type="protein sequence ID" value="AAF24298.1"/>
    <property type="molecule type" value="Genomic_DNA"/>
</dbReference>
<dbReference type="EMBL" id="CP000143">
    <property type="protein sequence ID" value="ABA79435.1"/>
    <property type="molecule type" value="Genomic_DNA"/>
</dbReference>
<dbReference type="PIR" id="S30916">
    <property type="entry name" value="S30916"/>
</dbReference>
<dbReference type="PIR" id="T50754">
    <property type="entry name" value="T50754"/>
</dbReference>
<dbReference type="RefSeq" id="WP_011338110.1">
    <property type="nucleotide sequence ID" value="NC_007493.2"/>
</dbReference>
<dbReference type="RefSeq" id="YP_353336.1">
    <property type="nucleotide sequence ID" value="NC_007493.2"/>
</dbReference>
<dbReference type="SMR" id="Q02432"/>
<dbReference type="STRING" id="272943.RSP_0261"/>
<dbReference type="EnsemblBacteria" id="ABA79435">
    <property type="protein sequence ID" value="ABA79435"/>
    <property type="gene ID" value="RSP_0261"/>
</dbReference>
<dbReference type="GeneID" id="3719271"/>
<dbReference type="KEGG" id="rsp:RSP_0261"/>
<dbReference type="PATRIC" id="fig|272943.9.peg.2205"/>
<dbReference type="eggNOG" id="COG2710">
    <property type="taxonomic scope" value="Bacteria"/>
</dbReference>
<dbReference type="OrthoDB" id="5754220at2"/>
<dbReference type="PhylomeDB" id="Q02432"/>
<dbReference type="BioCyc" id="MetaCyc:MONOMER-13257"/>
<dbReference type="UniPathway" id="UPA00671"/>
<dbReference type="Proteomes" id="UP000002703">
    <property type="component" value="Chromosome 1"/>
</dbReference>
<dbReference type="GO" id="GO:0005886">
    <property type="term" value="C:plasma membrane"/>
    <property type="evidence" value="ECO:0007669"/>
    <property type="project" value="UniProtKB-SubCell"/>
</dbReference>
<dbReference type="GO" id="GO:0016731">
    <property type="term" value="F:oxidoreductase activity, acting on iron-sulfur proteins as donors, NAD or NADP as acceptor"/>
    <property type="evidence" value="ECO:0007669"/>
    <property type="project" value="InterPro"/>
</dbReference>
<dbReference type="GO" id="GO:0036070">
    <property type="term" value="P:light-independent bacteriochlorophyll biosynthetic process"/>
    <property type="evidence" value="ECO:0007669"/>
    <property type="project" value="UniProtKB-UniPathway"/>
</dbReference>
<dbReference type="GO" id="GO:0015979">
    <property type="term" value="P:photosynthesis"/>
    <property type="evidence" value="ECO:0007669"/>
    <property type="project" value="UniProtKB-KW"/>
</dbReference>
<dbReference type="Gene3D" id="3.40.50.1980">
    <property type="entry name" value="Nitrogenase molybdenum iron protein domain"/>
    <property type="match status" value="2"/>
</dbReference>
<dbReference type="InterPro" id="IPR010245">
    <property type="entry name" value="BchY"/>
</dbReference>
<dbReference type="InterPro" id="IPR050293">
    <property type="entry name" value="LIPOR_BchN/ChlN"/>
</dbReference>
<dbReference type="InterPro" id="IPR000510">
    <property type="entry name" value="Nase/OxRdtase_comp1"/>
</dbReference>
<dbReference type="InterPro" id="IPR016209">
    <property type="entry name" value="Protochlorophyllide_Rdtase"/>
</dbReference>
<dbReference type="NCBIfam" id="TIGR02015">
    <property type="entry name" value="BchY"/>
    <property type="match status" value="1"/>
</dbReference>
<dbReference type="PANTHER" id="PTHR39429">
    <property type="entry name" value="LIGHT-INDEPENDENT PROTOCHLOROPHYLLIDE REDUCTASE SUBUNIT N"/>
    <property type="match status" value="1"/>
</dbReference>
<dbReference type="PANTHER" id="PTHR39429:SF3">
    <property type="entry name" value="LIGHT-INDEPENDENT PROTOCHLOROPHYLLIDE REDUCTASE SUBUNIT N"/>
    <property type="match status" value="1"/>
</dbReference>
<dbReference type="Pfam" id="PF00148">
    <property type="entry name" value="Oxidored_nitro"/>
    <property type="match status" value="1"/>
</dbReference>
<dbReference type="PIRSF" id="PIRSF000163">
    <property type="entry name" value="PCP_ChlB"/>
    <property type="match status" value="1"/>
</dbReference>
<dbReference type="SUPFAM" id="SSF53807">
    <property type="entry name" value="Helical backbone' metal receptor"/>
    <property type="match status" value="1"/>
</dbReference>
<proteinExistence type="inferred from homology"/>
<accession>Q02432</accession>
<accession>Q3J199</accession>
<accession>Q9RFC1</accession>
<organism>
    <name type="scientific">Cereibacter sphaeroides (strain ATCC 17023 / DSM 158 / JCM 6121 / CCUG 31486 / LMG 2827 / NBRC 12203 / NCIMB 8253 / ATH 2.4.1.)</name>
    <name type="common">Rhodobacter sphaeroides</name>
    <dbReference type="NCBI Taxonomy" id="272943"/>
    <lineage>
        <taxon>Bacteria</taxon>
        <taxon>Pseudomonadati</taxon>
        <taxon>Pseudomonadota</taxon>
        <taxon>Alphaproteobacteria</taxon>
        <taxon>Rhodobacterales</taxon>
        <taxon>Paracoccaceae</taxon>
        <taxon>Cereibacter</taxon>
    </lineage>
</organism>
<evidence type="ECO:0000250" key="1">
    <source>
        <dbReference type="UniProtKB" id="P26178"/>
    </source>
</evidence>
<evidence type="ECO:0000255" key="2"/>
<evidence type="ECO:0000305" key="3"/>
<keyword id="KW-0077">Bacteriochlorophyll biosynthesis</keyword>
<keyword id="KW-1003">Cell membrane</keyword>
<keyword id="KW-0149">Chlorophyll biosynthesis</keyword>
<keyword id="KW-0472">Membrane</keyword>
<keyword id="KW-0560">Oxidoreductase</keyword>
<keyword id="KW-0602">Photosynthesis</keyword>
<keyword id="KW-1185">Reference proteome</keyword>
<keyword id="KW-0812">Transmembrane</keyword>
<keyword id="KW-1133">Transmembrane helix</keyword>
<comment type="function">
    <text evidence="1">Converts chlorophylls (Chl) into bacteriochlorophylls (BChl) by reducing ring B of the tetrapyrrole.</text>
</comment>
<comment type="catalytic activity">
    <reaction evidence="1">
        <text>3-deacetyl-3-vinylbacteriochlorophyllide a + 2 oxidized [2Fe-2S]-[ferredoxin] + ADP + phosphate = chlorophyllide a + 2 reduced [2Fe-2S]-[ferredoxin] + ATP + H2O + H(+)</text>
        <dbReference type="Rhea" id="RHEA:37051"/>
        <dbReference type="Rhea" id="RHEA-COMP:10000"/>
        <dbReference type="Rhea" id="RHEA-COMP:10001"/>
        <dbReference type="ChEBI" id="CHEBI:15377"/>
        <dbReference type="ChEBI" id="CHEBI:15378"/>
        <dbReference type="ChEBI" id="CHEBI:30616"/>
        <dbReference type="ChEBI" id="CHEBI:33737"/>
        <dbReference type="ChEBI" id="CHEBI:33738"/>
        <dbReference type="ChEBI" id="CHEBI:43474"/>
        <dbReference type="ChEBI" id="CHEBI:83348"/>
        <dbReference type="ChEBI" id="CHEBI:83373"/>
        <dbReference type="ChEBI" id="CHEBI:456216"/>
        <dbReference type="EC" id="1.3.7.15"/>
    </reaction>
</comment>
<comment type="catalytic activity">
    <reaction evidence="1">
        <text>bacteriochlorophyllide a + 2 oxidized [2Fe-2S]-[ferredoxin] + ADP + phosphate = 3-acetyl-3-devinylchlorophyllide a + 2 reduced [2Fe-2S]-[ferredoxin] + ATP + H2O + H(+)</text>
        <dbReference type="Rhea" id="RHEA:48944"/>
        <dbReference type="Rhea" id="RHEA-COMP:10000"/>
        <dbReference type="Rhea" id="RHEA-COMP:10001"/>
        <dbReference type="ChEBI" id="CHEBI:15377"/>
        <dbReference type="ChEBI" id="CHEBI:15378"/>
        <dbReference type="ChEBI" id="CHEBI:30616"/>
        <dbReference type="ChEBI" id="CHEBI:33737"/>
        <dbReference type="ChEBI" id="CHEBI:33738"/>
        <dbReference type="ChEBI" id="CHEBI:43474"/>
        <dbReference type="ChEBI" id="CHEBI:90794"/>
        <dbReference type="ChEBI" id="CHEBI:90795"/>
        <dbReference type="ChEBI" id="CHEBI:456216"/>
        <dbReference type="EC" id="1.3.7.15"/>
    </reaction>
</comment>
<comment type="catalytic activity">
    <reaction evidence="1">
        <text>3-deacetyl-3-(1-hydroxyethyl)bacteriochlorophyllide a + 2 oxidized [2Fe-2S]-[ferredoxin] + ADP + phosphate = 3-devinyl-3-(1-hydroxyethyl)chlorophyllide a + 2 reduced [2Fe-2S]-[ferredoxin] + ATP + H2O + H(+)</text>
        <dbReference type="Rhea" id="RHEA:48948"/>
        <dbReference type="Rhea" id="RHEA-COMP:10000"/>
        <dbReference type="Rhea" id="RHEA-COMP:10001"/>
        <dbReference type="ChEBI" id="CHEBI:15377"/>
        <dbReference type="ChEBI" id="CHEBI:15378"/>
        <dbReference type="ChEBI" id="CHEBI:30616"/>
        <dbReference type="ChEBI" id="CHEBI:33737"/>
        <dbReference type="ChEBI" id="CHEBI:33738"/>
        <dbReference type="ChEBI" id="CHEBI:43474"/>
        <dbReference type="ChEBI" id="CHEBI:90791"/>
        <dbReference type="ChEBI" id="CHEBI:90792"/>
        <dbReference type="ChEBI" id="CHEBI:456216"/>
        <dbReference type="EC" id="1.3.7.15"/>
    </reaction>
</comment>
<comment type="pathway">
    <text>Porphyrin-containing compound metabolism; bacteriochlorophyll biosynthesis (light-independent).</text>
</comment>
<comment type="subunit">
    <text evidence="1">Chlorophyllide reductase is composed of three subunits; BchX, BchY and BchZ. Forms a heterodimer of one BchY and one BchZ subunit.</text>
</comment>
<comment type="subcellular location">
    <subcellularLocation>
        <location evidence="3">Cell membrane</location>
        <topology evidence="3">Multi-pass membrane protein</topology>
    </subcellularLocation>
</comment>
<comment type="similarity">
    <text evidence="3">Belongs to the BchN/ChlN family.</text>
</comment>
<protein>
    <recommendedName>
        <fullName>Chlorophyllide reductase 52.5 kDa chain</fullName>
        <ecNumber evidence="1">1.3.7.15</ecNumber>
    </recommendedName>
    <alternativeName>
        <fullName>Chlorin reductase</fullName>
    </alternativeName>
</protein>
<gene>
    <name type="primary">bchY</name>
    <name type="ordered locus">RHOS4_18670</name>
    <name type="ORF">RSP_0261</name>
</gene>
<name>BCHY_CERS4</name>
<reference key="1">
    <citation type="journal article" date="1993" name="Mol. Gen. Genet.">
        <title>Genetic analysis of the bchC and bchA genes of Rhodobacter sphaeroides.</title>
        <authorList>
            <person name="McGlynn P."/>
            <person name="Hunter C.N."/>
        </authorList>
    </citation>
    <scope>NUCLEOTIDE SEQUENCE [GENOMIC DNA]</scope>
</reference>
<reference key="2">
    <citation type="journal article" date="2000" name="Nucleic Acids Res.">
        <title>DNA sequence analysis of the photosynthesis region of Rhodobacter sphaeroides 2.4.1.</title>
        <authorList>
            <person name="Choudhary M."/>
            <person name="Kaplan S."/>
        </authorList>
    </citation>
    <scope>NUCLEOTIDE SEQUENCE [GENOMIC DNA]</scope>
</reference>
<reference key="3">
    <citation type="submission" date="2005-09" db="EMBL/GenBank/DDBJ databases">
        <title>Complete sequence of chromosome 1 of Rhodobacter sphaeroides 2.4.1.</title>
        <authorList>
            <person name="Copeland A."/>
            <person name="Lucas S."/>
            <person name="Lapidus A."/>
            <person name="Barry K."/>
            <person name="Detter J.C."/>
            <person name="Glavina T."/>
            <person name="Hammon N."/>
            <person name="Israni S."/>
            <person name="Pitluck S."/>
            <person name="Richardson P."/>
            <person name="Mackenzie C."/>
            <person name="Choudhary M."/>
            <person name="Larimer F."/>
            <person name="Hauser L.J."/>
            <person name="Land M."/>
            <person name="Donohue T.J."/>
            <person name="Kaplan S."/>
        </authorList>
    </citation>
    <scope>NUCLEOTIDE SEQUENCE [LARGE SCALE GENOMIC DNA]</scope>
    <source>
        <strain>ATCC 17023 / DSM 158 / JCM 6121 / CCUG 31486 / LMG 2827 / NBRC 12203 / NCIMB 8253 / ATH 2.4.1.</strain>
    </source>
</reference>
<feature type="chain" id="PRO_0000208623" description="Chlorophyllide reductase 52.5 kDa chain">
    <location>
        <begin position="1"/>
        <end position="502"/>
    </location>
</feature>
<feature type="transmembrane region" description="Helical" evidence="2">
    <location>
        <begin position="70"/>
        <end position="87"/>
    </location>
</feature>
<feature type="transmembrane region" description="Helical" evidence="2">
    <location>
        <begin position="131"/>
        <end position="147"/>
    </location>
</feature>
<feature type="transmembrane region" description="Helical" evidence="2">
    <location>
        <begin position="221"/>
        <end position="238"/>
    </location>
</feature>
<feature type="sequence conflict" description="In Ref. 1; CAB38748." evidence="3" ref="1">
    <original>G</original>
    <variation>A</variation>
    <location>
        <position position="144"/>
    </location>
</feature>
<sequence>MSQTPGGAPMAPEAMGCHSTADMAAAASAAGNGELMERFKADYPVGPHDKPQSMCPAFGSLRTGLRMRRVGTIISGSACCTYGLSFVSHFYGARRSIGYVPFNSESLVTGKLFEDIREAVHEMADPQRYDAIVVTNLCVPTASGVPLRLLPSEINGVRIVGIDVPGFGVPTHAEAKDVLAGAMLKYARSEIEAGPVQAPVSGRSDRPTVALLGEMFPADPVMIGALLAPLGLAAGPVVPCRDWRELYAALDSGVAAAIHPFYTASVREFQAAGRAIVGSAPVGHDGTAAWLAAIGEAYGIAADKVAAAQNAFLPAIRGALAGAPIKGRITLSGYEGSELIVARLLIESGAEVPYVGTAAGRTPWSAADREWLEARGTVVKFRASLEDDLAAMQGFEPDLAVGTTPVVQKAKSLGIPSLYFTNLISARPLMGPAGAGSLAQVINAAIGNRERMSKMKAFFAGVGEGDTAGIWEGAPNLRPDFRAAHQKKLEKAARAAKSEEMI</sequence>